<sequence length="116" mass="13480">MPRVKRGNVARKRRKKILKLAKGFRGSHSKLFRTANQQVMKALRNAYRDRRKKKRDFRRLWIVRVNAAARLNGLSYSKLTHQLKKANIEINRKMLAELAVVDPQAFAQVVEVAKSA</sequence>
<protein>
    <recommendedName>
        <fullName evidence="1">Large ribosomal subunit protein bL20</fullName>
    </recommendedName>
    <alternativeName>
        <fullName evidence="2">50S ribosomal protein L20</fullName>
    </alternativeName>
</protein>
<comment type="function">
    <text evidence="1">Binds directly to 23S ribosomal RNA and is necessary for the in vitro assembly process of the 50S ribosomal subunit. It is not involved in the protein synthesizing functions of that subunit.</text>
</comment>
<comment type="similarity">
    <text evidence="1">Belongs to the bacterial ribosomal protein bL20 family.</text>
</comment>
<organism>
    <name type="scientific">Picosynechococcus sp. (strain ATCC 27264 / PCC 7002 / PR-6)</name>
    <name type="common">Agmenellum quadruplicatum</name>
    <dbReference type="NCBI Taxonomy" id="32049"/>
    <lineage>
        <taxon>Bacteria</taxon>
        <taxon>Bacillati</taxon>
        <taxon>Cyanobacteriota</taxon>
        <taxon>Cyanophyceae</taxon>
        <taxon>Oscillatoriophycideae</taxon>
        <taxon>Chroococcales</taxon>
        <taxon>Geminocystaceae</taxon>
        <taxon>Picosynechococcus</taxon>
    </lineage>
</organism>
<evidence type="ECO:0000255" key="1">
    <source>
        <dbReference type="HAMAP-Rule" id="MF_00382"/>
    </source>
</evidence>
<evidence type="ECO:0000305" key="2"/>
<gene>
    <name evidence="1" type="primary">rplT</name>
    <name evidence="1" type="synonym">rpl20</name>
    <name type="ordered locus">SYNPCC7002_A2180</name>
</gene>
<name>RL20_PICP2</name>
<dbReference type="EMBL" id="CP000951">
    <property type="protein sequence ID" value="ACB00161.1"/>
    <property type="molecule type" value="Genomic_DNA"/>
</dbReference>
<dbReference type="RefSeq" id="WP_012307780.1">
    <property type="nucleotide sequence ID" value="NZ_JAHHPU010000010.1"/>
</dbReference>
<dbReference type="SMR" id="B1XIQ9"/>
<dbReference type="STRING" id="32049.SYNPCC7002_A2180"/>
<dbReference type="KEGG" id="syp:SYNPCC7002_A2180"/>
<dbReference type="eggNOG" id="COG0292">
    <property type="taxonomic scope" value="Bacteria"/>
</dbReference>
<dbReference type="HOGENOM" id="CLU_123265_0_1_3"/>
<dbReference type="Proteomes" id="UP000001688">
    <property type="component" value="Chromosome"/>
</dbReference>
<dbReference type="GO" id="GO:1990904">
    <property type="term" value="C:ribonucleoprotein complex"/>
    <property type="evidence" value="ECO:0007669"/>
    <property type="project" value="UniProtKB-KW"/>
</dbReference>
<dbReference type="GO" id="GO:0005840">
    <property type="term" value="C:ribosome"/>
    <property type="evidence" value="ECO:0007669"/>
    <property type="project" value="UniProtKB-KW"/>
</dbReference>
<dbReference type="GO" id="GO:0019843">
    <property type="term" value="F:rRNA binding"/>
    <property type="evidence" value="ECO:0007669"/>
    <property type="project" value="UniProtKB-UniRule"/>
</dbReference>
<dbReference type="GO" id="GO:0003735">
    <property type="term" value="F:structural constituent of ribosome"/>
    <property type="evidence" value="ECO:0007669"/>
    <property type="project" value="InterPro"/>
</dbReference>
<dbReference type="GO" id="GO:0000027">
    <property type="term" value="P:ribosomal large subunit assembly"/>
    <property type="evidence" value="ECO:0007669"/>
    <property type="project" value="UniProtKB-UniRule"/>
</dbReference>
<dbReference type="GO" id="GO:0006412">
    <property type="term" value="P:translation"/>
    <property type="evidence" value="ECO:0007669"/>
    <property type="project" value="InterPro"/>
</dbReference>
<dbReference type="CDD" id="cd07026">
    <property type="entry name" value="Ribosomal_L20"/>
    <property type="match status" value="1"/>
</dbReference>
<dbReference type="FunFam" id="1.10.1900.20:FF:000001">
    <property type="entry name" value="50S ribosomal protein L20"/>
    <property type="match status" value="1"/>
</dbReference>
<dbReference type="Gene3D" id="6.10.160.10">
    <property type="match status" value="1"/>
</dbReference>
<dbReference type="Gene3D" id="1.10.1900.20">
    <property type="entry name" value="Ribosomal protein L20"/>
    <property type="match status" value="1"/>
</dbReference>
<dbReference type="HAMAP" id="MF_00382">
    <property type="entry name" value="Ribosomal_bL20"/>
    <property type="match status" value="1"/>
</dbReference>
<dbReference type="InterPro" id="IPR005813">
    <property type="entry name" value="Ribosomal_bL20"/>
</dbReference>
<dbReference type="InterPro" id="IPR049946">
    <property type="entry name" value="RIBOSOMAL_L20_CS"/>
</dbReference>
<dbReference type="InterPro" id="IPR035566">
    <property type="entry name" value="Ribosomal_protein_bL20_C"/>
</dbReference>
<dbReference type="NCBIfam" id="TIGR01032">
    <property type="entry name" value="rplT_bact"/>
    <property type="match status" value="1"/>
</dbReference>
<dbReference type="PANTHER" id="PTHR10986">
    <property type="entry name" value="39S RIBOSOMAL PROTEIN L20"/>
    <property type="match status" value="1"/>
</dbReference>
<dbReference type="Pfam" id="PF00453">
    <property type="entry name" value="Ribosomal_L20"/>
    <property type="match status" value="1"/>
</dbReference>
<dbReference type="PRINTS" id="PR00062">
    <property type="entry name" value="RIBOSOMALL20"/>
</dbReference>
<dbReference type="SUPFAM" id="SSF74731">
    <property type="entry name" value="Ribosomal protein L20"/>
    <property type="match status" value="1"/>
</dbReference>
<dbReference type="PROSITE" id="PS00937">
    <property type="entry name" value="RIBOSOMAL_L20"/>
    <property type="match status" value="1"/>
</dbReference>
<accession>B1XIQ9</accession>
<keyword id="KW-1185">Reference proteome</keyword>
<keyword id="KW-0687">Ribonucleoprotein</keyword>
<keyword id="KW-0689">Ribosomal protein</keyword>
<keyword id="KW-0694">RNA-binding</keyword>
<keyword id="KW-0699">rRNA-binding</keyword>
<proteinExistence type="inferred from homology"/>
<reference key="1">
    <citation type="submission" date="2008-02" db="EMBL/GenBank/DDBJ databases">
        <title>Complete sequence of Synechococcus sp. PCC 7002.</title>
        <authorList>
            <person name="Li T."/>
            <person name="Zhao J."/>
            <person name="Zhao C."/>
            <person name="Liu Z."/>
            <person name="Zhao F."/>
            <person name="Marquardt J."/>
            <person name="Nomura C.T."/>
            <person name="Persson S."/>
            <person name="Detter J.C."/>
            <person name="Richardson P.M."/>
            <person name="Lanz C."/>
            <person name="Schuster S.C."/>
            <person name="Wang J."/>
            <person name="Li S."/>
            <person name="Huang X."/>
            <person name="Cai T."/>
            <person name="Yu Z."/>
            <person name="Luo J."/>
            <person name="Zhao J."/>
            <person name="Bryant D.A."/>
        </authorList>
    </citation>
    <scope>NUCLEOTIDE SEQUENCE [LARGE SCALE GENOMIC DNA]</scope>
    <source>
        <strain>ATCC 27264 / PCC 7002 / PR-6</strain>
    </source>
</reference>
<feature type="chain" id="PRO_1000122382" description="Large ribosomal subunit protein bL20">
    <location>
        <begin position="1"/>
        <end position="116"/>
    </location>
</feature>